<evidence type="ECO:0000255" key="1">
    <source>
        <dbReference type="HAMAP-Rule" id="MF_01368"/>
    </source>
</evidence>
<evidence type="ECO:0000305" key="2"/>
<name>RL17_CHLCV</name>
<organism>
    <name type="scientific">Chlamydia caviae (strain ATCC VR-813 / DSM 19441 / 03DC25 / GPIC)</name>
    <name type="common">Chlamydophila caviae</name>
    <dbReference type="NCBI Taxonomy" id="227941"/>
    <lineage>
        <taxon>Bacteria</taxon>
        <taxon>Pseudomonadati</taxon>
        <taxon>Chlamydiota</taxon>
        <taxon>Chlamydiia</taxon>
        <taxon>Chlamydiales</taxon>
        <taxon>Chlamydiaceae</taxon>
        <taxon>Chlamydia/Chlamydophila group</taxon>
        <taxon>Chlamydia</taxon>
    </lineage>
</organism>
<accession>Q824N0</accession>
<gene>
    <name evidence="1" type="primary">rplQ</name>
    <name type="ordered locus">CCA_00115</name>
</gene>
<keyword id="KW-0687">Ribonucleoprotein</keyword>
<keyword id="KW-0689">Ribosomal protein</keyword>
<reference key="1">
    <citation type="journal article" date="2003" name="Nucleic Acids Res.">
        <title>Genome sequence of Chlamydophila caviae (Chlamydia psittaci GPIC): examining the role of niche-specific genes in the evolution of the Chlamydiaceae.</title>
        <authorList>
            <person name="Read T.D."/>
            <person name="Myers G.S.A."/>
            <person name="Brunham R.C."/>
            <person name="Nelson W.C."/>
            <person name="Paulsen I.T."/>
            <person name="Heidelberg J.F."/>
            <person name="Holtzapple E.K."/>
            <person name="Khouri H.M."/>
            <person name="Federova N.B."/>
            <person name="Carty H.A."/>
            <person name="Umayam L.A."/>
            <person name="Haft D.H."/>
            <person name="Peterson J.D."/>
            <person name="Beanan M.J."/>
            <person name="White O."/>
            <person name="Salzberg S.L."/>
            <person name="Hsia R.-C."/>
            <person name="McClarty G."/>
            <person name="Rank R.G."/>
            <person name="Bavoil P.M."/>
            <person name="Fraser C.M."/>
        </authorList>
    </citation>
    <scope>NUCLEOTIDE SEQUENCE [LARGE SCALE GENOMIC DNA]</scope>
    <source>
        <strain>ATCC VR-813 / DSM 19441 / 03DC25 / GPIC</strain>
    </source>
</reference>
<protein>
    <recommendedName>
        <fullName evidence="1">Large ribosomal subunit protein bL17</fullName>
    </recommendedName>
    <alternativeName>
        <fullName evidence="2">50S ribosomal protein L17</fullName>
    </alternativeName>
</protein>
<comment type="subunit">
    <text evidence="1">Part of the 50S ribosomal subunit. Contacts protein L32.</text>
</comment>
<comment type="similarity">
    <text evidence="1">Belongs to the bacterial ribosomal protein bL17 family.</text>
</comment>
<sequence length="142" mass="16301">MQHARKKFRVGRTSAHNRCMLANMLKSLIHQERIETTLPKAKELRRCADKMITLAKKNTLAARRLAVARLMVRYNKLTSKEARQAKAGDLSAYNVDRTVINKLFDQLGTRFVSRNGGYTRILKLQNRVGDNARKCIIEFLAD</sequence>
<feature type="chain" id="PRO_1000055796" description="Large ribosomal subunit protein bL17">
    <location>
        <begin position="1"/>
        <end position="142"/>
    </location>
</feature>
<proteinExistence type="inferred from homology"/>
<dbReference type="EMBL" id="AE015925">
    <property type="protein sequence ID" value="AAP04867.1"/>
    <property type="molecule type" value="Genomic_DNA"/>
</dbReference>
<dbReference type="RefSeq" id="WP_011006088.1">
    <property type="nucleotide sequence ID" value="NC_003361.3"/>
</dbReference>
<dbReference type="SMR" id="Q824N0"/>
<dbReference type="STRING" id="227941.CCA_00115"/>
<dbReference type="KEGG" id="cca:CCA_00115"/>
<dbReference type="eggNOG" id="COG0203">
    <property type="taxonomic scope" value="Bacteria"/>
</dbReference>
<dbReference type="HOGENOM" id="CLU_074407_2_0_0"/>
<dbReference type="OrthoDB" id="9809073at2"/>
<dbReference type="Proteomes" id="UP000002193">
    <property type="component" value="Chromosome"/>
</dbReference>
<dbReference type="GO" id="GO:0022625">
    <property type="term" value="C:cytosolic large ribosomal subunit"/>
    <property type="evidence" value="ECO:0007669"/>
    <property type="project" value="TreeGrafter"/>
</dbReference>
<dbReference type="GO" id="GO:0003735">
    <property type="term" value="F:structural constituent of ribosome"/>
    <property type="evidence" value="ECO:0007669"/>
    <property type="project" value="InterPro"/>
</dbReference>
<dbReference type="GO" id="GO:0006412">
    <property type="term" value="P:translation"/>
    <property type="evidence" value="ECO:0007669"/>
    <property type="project" value="UniProtKB-UniRule"/>
</dbReference>
<dbReference type="FunFam" id="3.90.1030.10:FF:000003">
    <property type="entry name" value="50S ribosomal protein L17"/>
    <property type="match status" value="1"/>
</dbReference>
<dbReference type="Gene3D" id="3.90.1030.10">
    <property type="entry name" value="Ribosomal protein L17"/>
    <property type="match status" value="1"/>
</dbReference>
<dbReference type="HAMAP" id="MF_01368">
    <property type="entry name" value="Ribosomal_bL17"/>
    <property type="match status" value="1"/>
</dbReference>
<dbReference type="InterPro" id="IPR000456">
    <property type="entry name" value="Ribosomal_bL17"/>
</dbReference>
<dbReference type="InterPro" id="IPR047859">
    <property type="entry name" value="Ribosomal_bL17_CS"/>
</dbReference>
<dbReference type="InterPro" id="IPR036373">
    <property type="entry name" value="Ribosomal_bL17_sf"/>
</dbReference>
<dbReference type="NCBIfam" id="TIGR00059">
    <property type="entry name" value="L17"/>
    <property type="match status" value="1"/>
</dbReference>
<dbReference type="PANTHER" id="PTHR14413:SF16">
    <property type="entry name" value="LARGE RIBOSOMAL SUBUNIT PROTEIN BL17M"/>
    <property type="match status" value="1"/>
</dbReference>
<dbReference type="PANTHER" id="PTHR14413">
    <property type="entry name" value="RIBOSOMAL PROTEIN L17"/>
    <property type="match status" value="1"/>
</dbReference>
<dbReference type="Pfam" id="PF01196">
    <property type="entry name" value="Ribosomal_L17"/>
    <property type="match status" value="1"/>
</dbReference>
<dbReference type="SUPFAM" id="SSF64263">
    <property type="entry name" value="Prokaryotic ribosomal protein L17"/>
    <property type="match status" value="1"/>
</dbReference>
<dbReference type="PROSITE" id="PS01167">
    <property type="entry name" value="RIBOSOMAL_L17"/>
    <property type="match status" value="1"/>
</dbReference>